<name>BIOB_ECO55</name>
<protein>
    <recommendedName>
        <fullName evidence="1">Biotin synthase</fullName>
        <ecNumber evidence="1">2.8.1.6</ecNumber>
    </recommendedName>
</protein>
<organism>
    <name type="scientific">Escherichia coli (strain 55989 / EAEC)</name>
    <dbReference type="NCBI Taxonomy" id="585055"/>
    <lineage>
        <taxon>Bacteria</taxon>
        <taxon>Pseudomonadati</taxon>
        <taxon>Pseudomonadota</taxon>
        <taxon>Gammaproteobacteria</taxon>
        <taxon>Enterobacterales</taxon>
        <taxon>Enterobacteriaceae</taxon>
        <taxon>Escherichia</taxon>
    </lineage>
</organism>
<reference key="1">
    <citation type="journal article" date="2009" name="PLoS Genet.">
        <title>Organised genome dynamics in the Escherichia coli species results in highly diverse adaptive paths.</title>
        <authorList>
            <person name="Touchon M."/>
            <person name="Hoede C."/>
            <person name="Tenaillon O."/>
            <person name="Barbe V."/>
            <person name="Baeriswyl S."/>
            <person name="Bidet P."/>
            <person name="Bingen E."/>
            <person name="Bonacorsi S."/>
            <person name="Bouchier C."/>
            <person name="Bouvet O."/>
            <person name="Calteau A."/>
            <person name="Chiapello H."/>
            <person name="Clermont O."/>
            <person name="Cruveiller S."/>
            <person name="Danchin A."/>
            <person name="Diard M."/>
            <person name="Dossat C."/>
            <person name="Karoui M.E."/>
            <person name="Frapy E."/>
            <person name="Garry L."/>
            <person name="Ghigo J.M."/>
            <person name="Gilles A.M."/>
            <person name="Johnson J."/>
            <person name="Le Bouguenec C."/>
            <person name="Lescat M."/>
            <person name="Mangenot S."/>
            <person name="Martinez-Jehanne V."/>
            <person name="Matic I."/>
            <person name="Nassif X."/>
            <person name="Oztas S."/>
            <person name="Petit M.A."/>
            <person name="Pichon C."/>
            <person name="Rouy Z."/>
            <person name="Ruf C.S."/>
            <person name="Schneider D."/>
            <person name="Tourret J."/>
            <person name="Vacherie B."/>
            <person name="Vallenet D."/>
            <person name="Medigue C."/>
            <person name="Rocha E.P.C."/>
            <person name="Denamur E."/>
        </authorList>
    </citation>
    <scope>NUCLEOTIDE SEQUENCE [LARGE SCALE GENOMIC DNA]</scope>
    <source>
        <strain>55989 / EAEC</strain>
    </source>
</reference>
<sequence length="346" mass="38648">MAHRPRWTLSQVTELFEKPLLDLLFEAQQVHRQHFDPRQVQVSTLLSIKTGACPEDCKYCPQSSRYKTGLEAERLMEVEQVLESARKAKAAGSTRFCMGAAWKNPHERDMPYLEQMVQGVKAMGLEACMTLGTLSESQAQRLANAGLDYYNHNLDTSPEFYGNIITTRTYQERLDTLEKVRDAGIKVCSGGIVGLGETVKDRAGLLLQLANLPTPPESVPINMLVKVKGTPLADNDDVDAFDFIRTIAVARIMMPTSYVRLSAGREQMNEQTQAMCFMAGANSIFYGCKLLTTPNPEEDKDLQLFRKLGLNPQQTAVLAGDNEQQQRLEQALMTPDTDEYYNAAAL</sequence>
<gene>
    <name evidence="1" type="primary">bioB</name>
    <name type="ordered locus">EC55989_0818</name>
</gene>
<comment type="function">
    <text evidence="1">Catalyzes the conversion of dethiobiotin (DTB) to biotin by the insertion of a sulfur atom into dethiobiotin via a radical-based mechanism.</text>
</comment>
<comment type="catalytic activity">
    <reaction evidence="1">
        <text>(4R,5S)-dethiobiotin + (sulfur carrier)-SH + 2 reduced [2Fe-2S]-[ferredoxin] + 2 S-adenosyl-L-methionine = (sulfur carrier)-H + biotin + 2 5'-deoxyadenosine + 2 L-methionine + 2 oxidized [2Fe-2S]-[ferredoxin]</text>
        <dbReference type="Rhea" id="RHEA:22060"/>
        <dbReference type="Rhea" id="RHEA-COMP:10000"/>
        <dbReference type="Rhea" id="RHEA-COMP:10001"/>
        <dbReference type="Rhea" id="RHEA-COMP:14737"/>
        <dbReference type="Rhea" id="RHEA-COMP:14739"/>
        <dbReference type="ChEBI" id="CHEBI:17319"/>
        <dbReference type="ChEBI" id="CHEBI:29917"/>
        <dbReference type="ChEBI" id="CHEBI:33737"/>
        <dbReference type="ChEBI" id="CHEBI:33738"/>
        <dbReference type="ChEBI" id="CHEBI:57586"/>
        <dbReference type="ChEBI" id="CHEBI:57844"/>
        <dbReference type="ChEBI" id="CHEBI:59789"/>
        <dbReference type="ChEBI" id="CHEBI:64428"/>
        <dbReference type="ChEBI" id="CHEBI:149473"/>
        <dbReference type="EC" id="2.8.1.6"/>
    </reaction>
</comment>
<comment type="cofactor">
    <cofactor evidence="1">
        <name>[4Fe-4S] cluster</name>
        <dbReference type="ChEBI" id="CHEBI:49883"/>
    </cofactor>
    <text evidence="1">Binds 1 [4Fe-4S] cluster. The cluster is coordinated with 3 cysteines and an exchangeable S-adenosyl-L-methionine.</text>
</comment>
<comment type="cofactor">
    <cofactor evidence="1">
        <name>[2Fe-2S] cluster</name>
        <dbReference type="ChEBI" id="CHEBI:190135"/>
    </cofactor>
    <text evidence="1">Binds 1 [2Fe-2S] cluster. The cluster is coordinated with 3 cysteines and 1 arginine.</text>
</comment>
<comment type="pathway">
    <text evidence="1">Cofactor biosynthesis; biotin biosynthesis; biotin from 7,8-diaminononanoate: step 2/2.</text>
</comment>
<comment type="subunit">
    <text evidence="1">Homodimer.</text>
</comment>
<comment type="similarity">
    <text evidence="1">Belongs to the radical SAM superfamily. Biotin synthase family.</text>
</comment>
<accession>B7LC57</accession>
<evidence type="ECO:0000255" key="1">
    <source>
        <dbReference type="HAMAP-Rule" id="MF_01694"/>
    </source>
</evidence>
<evidence type="ECO:0000255" key="2">
    <source>
        <dbReference type="PROSITE-ProRule" id="PRU01266"/>
    </source>
</evidence>
<keyword id="KW-0001">2Fe-2S</keyword>
<keyword id="KW-0004">4Fe-4S</keyword>
<keyword id="KW-0093">Biotin biosynthesis</keyword>
<keyword id="KW-0408">Iron</keyword>
<keyword id="KW-0411">Iron-sulfur</keyword>
<keyword id="KW-0479">Metal-binding</keyword>
<keyword id="KW-1185">Reference proteome</keyword>
<keyword id="KW-0949">S-adenosyl-L-methionine</keyword>
<keyword id="KW-0808">Transferase</keyword>
<dbReference type="EC" id="2.8.1.6" evidence="1"/>
<dbReference type="EMBL" id="CU928145">
    <property type="protein sequence ID" value="CAU96684.1"/>
    <property type="molecule type" value="Genomic_DNA"/>
</dbReference>
<dbReference type="RefSeq" id="WP_000951213.1">
    <property type="nucleotide sequence ID" value="NZ_CP028304.1"/>
</dbReference>
<dbReference type="SMR" id="B7LC57"/>
<dbReference type="GeneID" id="93776655"/>
<dbReference type="KEGG" id="eck:EC55989_0818"/>
<dbReference type="HOGENOM" id="CLU_033172_1_2_6"/>
<dbReference type="UniPathway" id="UPA00078">
    <property type="reaction ID" value="UER00162"/>
</dbReference>
<dbReference type="Proteomes" id="UP000000746">
    <property type="component" value="Chromosome"/>
</dbReference>
<dbReference type="GO" id="GO:0051537">
    <property type="term" value="F:2 iron, 2 sulfur cluster binding"/>
    <property type="evidence" value="ECO:0007669"/>
    <property type="project" value="UniProtKB-KW"/>
</dbReference>
<dbReference type="GO" id="GO:0051539">
    <property type="term" value="F:4 iron, 4 sulfur cluster binding"/>
    <property type="evidence" value="ECO:0007669"/>
    <property type="project" value="UniProtKB-KW"/>
</dbReference>
<dbReference type="GO" id="GO:0004076">
    <property type="term" value="F:biotin synthase activity"/>
    <property type="evidence" value="ECO:0007669"/>
    <property type="project" value="UniProtKB-UniRule"/>
</dbReference>
<dbReference type="GO" id="GO:0005506">
    <property type="term" value="F:iron ion binding"/>
    <property type="evidence" value="ECO:0007669"/>
    <property type="project" value="UniProtKB-UniRule"/>
</dbReference>
<dbReference type="GO" id="GO:0009102">
    <property type="term" value="P:biotin biosynthetic process"/>
    <property type="evidence" value="ECO:0007669"/>
    <property type="project" value="UniProtKB-UniRule"/>
</dbReference>
<dbReference type="CDD" id="cd01335">
    <property type="entry name" value="Radical_SAM"/>
    <property type="match status" value="1"/>
</dbReference>
<dbReference type="FunFam" id="3.20.20.70:FF:000011">
    <property type="entry name" value="Biotin synthase"/>
    <property type="match status" value="1"/>
</dbReference>
<dbReference type="Gene3D" id="3.20.20.70">
    <property type="entry name" value="Aldolase class I"/>
    <property type="match status" value="1"/>
</dbReference>
<dbReference type="HAMAP" id="MF_01694">
    <property type="entry name" value="BioB"/>
    <property type="match status" value="1"/>
</dbReference>
<dbReference type="InterPro" id="IPR013785">
    <property type="entry name" value="Aldolase_TIM"/>
</dbReference>
<dbReference type="InterPro" id="IPR010722">
    <property type="entry name" value="BATS_dom"/>
</dbReference>
<dbReference type="InterPro" id="IPR002684">
    <property type="entry name" value="Biotin_synth/BioAB"/>
</dbReference>
<dbReference type="InterPro" id="IPR024177">
    <property type="entry name" value="Biotin_synthase"/>
</dbReference>
<dbReference type="InterPro" id="IPR006638">
    <property type="entry name" value="Elp3/MiaA/NifB-like_rSAM"/>
</dbReference>
<dbReference type="InterPro" id="IPR007197">
    <property type="entry name" value="rSAM"/>
</dbReference>
<dbReference type="NCBIfam" id="TIGR00433">
    <property type="entry name" value="bioB"/>
    <property type="match status" value="1"/>
</dbReference>
<dbReference type="PANTHER" id="PTHR22976">
    <property type="entry name" value="BIOTIN SYNTHASE"/>
    <property type="match status" value="1"/>
</dbReference>
<dbReference type="PANTHER" id="PTHR22976:SF2">
    <property type="entry name" value="BIOTIN SYNTHASE, MITOCHONDRIAL"/>
    <property type="match status" value="1"/>
</dbReference>
<dbReference type="Pfam" id="PF06968">
    <property type="entry name" value="BATS"/>
    <property type="match status" value="1"/>
</dbReference>
<dbReference type="Pfam" id="PF04055">
    <property type="entry name" value="Radical_SAM"/>
    <property type="match status" value="1"/>
</dbReference>
<dbReference type="PIRSF" id="PIRSF001619">
    <property type="entry name" value="Biotin_synth"/>
    <property type="match status" value="1"/>
</dbReference>
<dbReference type="SFLD" id="SFLDG01060">
    <property type="entry name" value="BATS_domain_containing"/>
    <property type="match status" value="1"/>
</dbReference>
<dbReference type="SFLD" id="SFLDF00272">
    <property type="entry name" value="biotin_synthase"/>
    <property type="match status" value="1"/>
</dbReference>
<dbReference type="SMART" id="SM00876">
    <property type="entry name" value="BATS"/>
    <property type="match status" value="1"/>
</dbReference>
<dbReference type="SMART" id="SM00729">
    <property type="entry name" value="Elp3"/>
    <property type="match status" value="1"/>
</dbReference>
<dbReference type="SUPFAM" id="SSF102114">
    <property type="entry name" value="Radical SAM enzymes"/>
    <property type="match status" value="1"/>
</dbReference>
<dbReference type="PROSITE" id="PS51918">
    <property type="entry name" value="RADICAL_SAM"/>
    <property type="match status" value="1"/>
</dbReference>
<feature type="chain" id="PRO_0000381358" description="Biotin synthase">
    <location>
        <begin position="1"/>
        <end position="346"/>
    </location>
</feature>
<feature type="domain" description="Radical SAM core" evidence="2">
    <location>
        <begin position="38"/>
        <end position="256"/>
    </location>
</feature>
<feature type="binding site" evidence="1">
    <location>
        <position position="53"/>
    </location>
    <ligand>
        <name>[4Fe-4S] cluster</name>
        <dbReference type="ChEBI" id="CHEBI:49883"/>
        <note>4Fe-4S-S-AdoMet</note>
    </ligand>
</feature>
<feature type="binding site" evidence="1">
    <location>
        <position position="57"/>
    </location>
    <ligand>
        <name>[4Fe-4S] cluster</name>
        <dbReference type="ChEBI" id="CHEBI:49883"/>
        <note>4Fe-4S-S-AdoMet</note>
    </ligand>
</feature>
<feature type="binding site" evidence="1">
    <location>
        <position position="60"/>
    </location>
    <ligand>
        <name>[4Fe-4S] cluster</name>
        <dbReference type="ChEBI" id="CHEBI:49883"/>
        <note>4Fe-4S-S-AdoMet</note>
    </ligand>
</feature>
<feature type="binding site" evidence="1">
    <location>
        <position position="97"/>
    </location>
    <ligand>
        <name>[2Fe-2S] cluster</name>
        <dbReference type="ChEBI" id="CHEBI:190135"/>
    </ligand>
</feature>
<feature type="binding site" evidence="1">
    <location>
        <position position="128"/>
    </location>
    <ligand>
        <name>[2Fe-2S] cluster</name>
        <dbReference type="ChEBI" id="CHEBI:190135"/>
    </ligand>
</feature>
<feature type="binding site" evidence="1">
    <location>
        <position position="188"/>
    </location>
    <ligand>
        <name>[2Fe-2S] cluster</name>
        <dbReference type="ChEBI" id="CHEBI:190135"/>
    </ligand>
</feature>
<feature type="binding site" evidence="1">
    <location>
        <position position="260"/>
    </location>
    <ligand>
        <name>[2Fe-2S] cluster</name>
        <dbReference type="ChEBI" id="CHEBI:190135"/>
    </ligand>
</feature>
<proteinExistence type="inferred from homology"/>